<evidence type="ECO:0000255" key="1">
    <source>
        <dbReference type="HAMAP-Rule" id="MF_00766"/>
    </source>
</evidence>
<evidence type="ECO:0000305" key="2"/>
<proteinExistence type="inferred from homology"/>
<name>MTGA_RHIME</name>
<sequence length="236" mass="26613">MPAGRWTATRRTWRSRRRRLVFIVLSVLILPYALIGLYLLEFIHPVSTLMLRDLVLLRGYDRQWVEFDDIAPVLVQSVMMSEDGQFCAHAGIDWAQMRGVVEDALDGEQTRGASTIPMQTVKNLFLWNGRSFVRKAMELPLAIAADFAWSKRRLMEIYLNVAEWGEGIYGIEAAARHHFGVSAAKLSRRQAALLAVSLPNPIDRTAGKPGRGLRRLAAVIERRAGRSGGYITCLYD</sequence>
<keyword id="KW-0997">Cell inner membrane</keyword>
<keyword id="KW-1003">Cell membrane</keyword>
<keyword id="KW-0133">Cell shape</keyword>
<keyword id="KW-0961">Cell wall biogenesis/degradation</keyword>
<keyword id="KW-0328">Glycosyltransferase</keyword>
<keyword id="KW-0472">Membrane</keyword>
<keyword id="KW-0573">Peptidoglycan synthesis</keyword>
<keyword id="KW-1185">Reference proteome</keyword>
<keyword id="KW-0808">Transferase</keyword>
<keyword id="KW-0812">Transmembrane</keyword>
<keyword id="KW-1133">Transmembrane helix</keyword>
<dbReference type="EC" id="2.4.99.28" evidence="1"/>
<dbReference type="EMBL" id="AL591688">
    <property type="protein sequence ID" value="CAC47845.1"/>
    <property type="status" value="ALT_INIT"/>
    <property type="molecule type" value="Genomic_DNA"/>
</dbReference>
<dbReference type="RefSeq" id="NP_387372.1">
    <property type="nucleotide sequence ID" value="NC_003047.1"/>
</dbReference>
<dbReference type="RefSeq" id="WP_010970530.1">
    <property type="nucleotide sequence ID" value="NC_003047.1"/>
</dbReference>
<dbReference type="SMR" id="Q92L23"/>
<dbReference type="CAZy" id="GT51">
    <property type="family name" value="Glycosyltransferase Family 51"/>
</dbReference>
<dbReference type="EnsemblBacteria" id="CAC47845">
    <property type="protein sequence ID" value="CAC47845"/>
    <property type="gene ID" value="SMc03883"/>
</dbReference>
<dbReference type="KEGG" id="sme:SMc03883"/>
<dbReference type="PATRIC" id="fig|266834.11.peg.4822"/>
<dbReference type="eggNOG" id="COG0744">
    <property type="taxonomic scope" value="Bacteria"/>
</dbReference>
<dbReference type="HOGENOM" id="CLU_006354_1_1_5"/>
<dbReference type="OrthoDB" id="9766909at2"/>
<dbReference type="UniPathway" id="UPA00219"/>
<dbReference type="Proteomes" id="UP000001976">
    <property type="component" value="Chromosome"/>
</dbReference>
<dbReference type="GO" id="GO:0009274">
    <property type="term" value="C:peptidoglycan-based cell wall"/>
    <property type="evidence" value="ECO:0007669"/>
    <property type="project" value="InterPro"/>
</dbReference>
<dbReference type="GO" id="GO:0005886">
    <property type="term" value="C:plasma membrane"/>
    <property type="evidence" value="ECO:0007669"/>
    <property type="project" value="UniProtKB-SubCell"/>
</dbReference>
<dbReference type="GO" id="GO:0016763">
    <property type="term" value="F:pentosyltransferase activity"/>
    <property type="evidence" value="ECO:0007669"/>
    <property type="project" value="InterPro"/>
</dbReference>
<dbReference type="GO" id="GO:0008955">
    <property type="term" value="F:peptidoglycan glycosyltransferase activity"/>
    <property type="evidence" value="ECO:0007669"/>
    <property type="project" value="UniProtKB-UniRule"/>
</dbReference>
<dbReference type="GO" id="GO:0071555">
    <property type="term" value="P:cell wall organization"/>
    <property type="evidence" value="ECO:0007669"/>
    <property type="project" value="UniProtKB-KW"/>
</dbReference>
<dbReference type="GO" id="GO:0009252">
    <property type="term" value="P:peptidoglycan biosynthetic process"/>
    <property type="evidence" value="ECO:0007669"/>
    <property type="project" value="UniProtKB-UniRule"/>
</dbReference>
<dbReference type="GO" id="GO:0008360">
    <property type="term" value="P:regulation of cell shape"/>
    <property type="evidence" value="ECO:0007669"/>
    <property type="project" value="UniProtKB-KW"/>
</dbReference>
<dbReference type="Gene3D" id="1.10.3810.10">
    <property type="entry name" value="Biosynthetic peptidoglycan transglycosylase-like"/>
    <property type="match status" value="1"/>
</dbReference>
<dbReference type="HAMAP" id="MF_00766">
    <property type="entry name" value="PGT_MtgA"/>
    <property type="match status" value="1"/>
</dbReference>
<dbReference type="InterPro" id="IPR001264">
    <property type="entry name" value="Glyco_trans_51"/>
</dbReference>
<dbReference type="InterPro" id="IPR023346">
    <property type="entry name" value="Lysozyme-like_dom_sf"/>
</dbReference>
<dbReference type="InterPro" id="IPR036950">
    <property type="entry name" value="PBP_transglycosylase"/>
</dbReference>
<dbReference type="InterPro" id="IPR011812">
    <property type="entry name" value="Pep_trsgly"/>
</dbReference>
<dbReference type="NCBIfam" id="TIGR02070">
    <property type="entry name" value="mono_pep_trsgly"/>
    <property type="match status" value="1"/>
</dbReference>
<dbReference type="PANTHER" id="PTHR30400:SF0">
    <property type="entry name" value="BIOSYNTHETIC PEPTIDOGLYCAN TRANSGLYCOSYLASE"/>
    <property type="match status" value="1"/>
</dbReference>
<dbReference type="PANTHER" id="PTHR30400">
    <property type="entry name" value="MONOFUNCTIONAL BIOSYNTHETIC PEPTIDOGLYCAN TRANSGLYCOSYLASE"/>
    <property type="match status" value="1"/>
</dbReference>
<dbReference type="Pfam" id="PF00912">
    <property type="entry name" value="Transgly"/>
    <property type="match status" value="1"/>
</dbReference>
<dbReference type="SUPFAM" id="SSF53955">
    <property type="entry name" value="Lysozyme-like"/>
    <property type="match status" value="1"/>
</dbReference>
<protein>
    <recommendedName>
        <fullName evidence="1">Biosynthetic peptidoglycan transglycosylase</fullName>
        <ecNumber evidence="1">2.4.99.28</ecNumber>
    </recommendedName>
    <alternativeName>
        <fullName evidence="1">Glycan polymerase</fullName>
    </alternativeName>
    <alternativeName>
        <fullName evidence="1">Peptidoglycan glycosyltransferase MtgA</fullName>
        <shortName evidence="1">PGT</shortName>
    </alternativeName>
</protein>
<feature type="chain" id="PRO_0000083142" description="Biosynthetic peptidoglycan transglycosylase">
    <location>
        <begin position="1"/>
        <end position="236"/>
    </location>
</feature>
<feature type="transmembrane region" description="Helical" evidence="1">
    <location>
        <begin position="20"/>
        <end position="40"/>
    </location>
</feature>
<reference key="1">
    <citation type="journal article" date="2001" name="Proc. Natl. Acad. Sci. U.S.A.">
        <title>Analysis of the chromosome sequence of the legume symbiont Sinorhizobium meliloti strain 1021.</title>
        <authorList>
            <person name="Capela D."/>
            <person name="Barloy-Hubler F."/>
            <person name="Gouzy J."/>
            <person name="Bothe G."/>
            <person name="Ampe F."/>
            <person name="Batut J."/>
            <person name="Boistard P."/>
            <person name="Becker A."/>
            <person name="Boutry M."/>
            <person name="Cadieu E."/>
            <person name="Dreano S."/>
            <person name="Gloux S."/>
            <person name="Godrie T."/>
            <person name="Goffeau A."/>
            <person name="Kahn D."/>
            <person name="Kiss E."/>
            <person name="Lelaure V."/>
            <person name="Masuy D."/>
            <person name="Pohl T."/>
            <person name="Portetelle D."/>
            <person name="Puehler A."/>
            <person name="Purnelle B."/>
            <person name="Ramsperger U."/>
            <person name="Renard C."/>
            <person name="Thebault P."/>
            <person name="Vandenbol M."/>
            <person name="Weidner S."/>
            <person name="Galibert F."/>
        </authorList>
    </citation>
    <scope>NUCLEOTIDE SEQUENCE [LARGE SCALE GENOMIC DNA]</scope>
    <source>
        <strain>1021</strain>
    </source>
</reference>
<reference key="2">
    <citation type="journal article" date="2001" name="Science">
        <title>The composite genome of the legume symbiont Sinorhizobium meliloti.</title>
        <authorList>
            <person name="Galibert F."/>
            <person name="Finan T.M."/>
            <person name="Long S.R."/>
            <person name="Puehler A."/>
            <person name="Abola P."/>
            <person name="Ampe F."/>
            <person name="Barloy-Hubler F."/>
            <person name="Barnett M.J."/>
            <person name="Becker A."/>
            <person name="Boistard P."/>
            <person name="Bothe G."/>
            <person name="Boutry M."/>
            <person name="Bowser L."/>
            <person name="Buhrmester J."/>
            <person name="Cadieu E."/>
            <person name="Capela D."/>
            <person name="Chain P."/>
            <person name="Cowie A."/>
            <person name="Davis R.W."/>
            <person name="Dreano S."/>
            <person name="Federspiel N.A."/>
            <person name="Fisher R.F."/>
            <person name="Gloux S."/>
            <person name="Godrie T."/>
            <person name="Goffeau A."/>
            <person name="Golding B."/>
            <person name="Gouzy J."/>
            <person name="Gurjal M."/>
            <person name="Hernandez-Lucas I."/>
            <person name="Hong A."/>
            <person name="Huizar L."/>
            <person name="Hyman R.W."/>
            <person name="Jones T."/>
            <person name="Kahn D."/>
            <person name="Kahn M.L."/>
            <person name="Kalman S."/>
            <person name="Keating D.H."/>
            <person name="Kiss E."/>
            <person name="Komp C."/>
            <person name="Lelaure V."/>
            <person name="Masuy D."/>
            <person name="Palm C."/>
            <person name="Peck M.C."/>
            <person name="Pohl T.M."/>
            <person name="Portetelle D."/>
            <person name="Purnelle B."/>
            <person name="Ramsperger U."/>
            <person name="Surzycki R."/>
            <person name="Thebault P."/>
            <person name="Vandenbol M."/>
            <person name="Vorhoelter F.J."/>
            <person name="Weidner S."/>
            <person name="Wells D.H."/>
            <person name="Wong K."/>
            <person name="Yeh K.-C."/>
            <person name="Batut J."/>
        </authorList>
    </citation>
    <scope>NUCLEOTIDE SEQUENCE [LARGE SCALE GENOMIC DNA]</scope>
    <source>
        <strain>1021</strain>
    </source>
</reference>
<organism>
    <name type="scientific">Rhizobium meliloti (strain 1021)</name>
    <name type="common">Ensifer meliloti</name>
    <name type="synonym">Sinorhizobium meliloti</name>
    <dbReference type="NCBI Taxonomy" id="266834"/>
    <lineage>
        <taxon>Bacteria</taxon>
        <taxon>Pseudomonadati</taxon>
        <taxon>Pseudomonadota</taxon>
        <taxon>Alphaproteobacteria</taxon>
        <taxon>Hyphomicrobiales</taxon>
        <taxon>Rhizobiaceae</taxon>
        <taxon>Sinorhizobium/Ensifer group</taxon>
        <taxon>Sinorhizobium</taxon>
    </lineage>
</organism>
<comment type="function">
    <text evidence="1">Peptidoglycan polymerase that catalyzes glycan chain elongation from lipid-linked precursors.</text>
</comment>
<comment type="catalytic activity">
    <reaction evidence="1">
        <text>[GlcNAc-(1-&gt;4)-Mur2Ac(oyl-L-Ala-gamma-D-Glu-L-Lys-D-Ala-D-Ala)](n)-di-trans,octa-cis-undecaprenyl diphosphate + beta-D-GlcNAc-(1-&gt;4)-Mur2Ac(oyl-L-Ala-gamma-D-Glu-L-Lys-D-Ala-D-Ala)-di-trans,octa-cis-undecaprenyl diphosphate = [GlcNAc-(1-&gt;4)-Mur2Ac(oyl-L-Ala-gamma-D-Glu-L-Lys-D-Ala-D-Ala)](n+1)-di-trans,octa-cis-undecaprenyl diphosphate + di-trans,octa-cis-undecaprenyl diphosphate + H(+)</text>
        <dbReference type="Rhea" id="RHEA:23708"/>
        <dbReference type="Rhea" id="RHEA-COMP:9602"/>
        <dbReference type="Rhea" id="RHEA-COMP:9603"/>
        <dbReference type="ChEBI" id="CHEBI:15378"/>
        <dbReference type="ChEBI" id="CHEBI:58405"/>
        <dbReference type="ChEBI" id="CHEBI:60033"/>
        <dbReference type="ChEBI" id="CHEBI:78435"/>
        <dbReference type="EC" id="2.4.99.28"/>
    </reaction>
</comment>
<comment type="pathway">
    <text evidence="1">Cell wall biogenesis; peptidoglycan biosynthesis.</text>
</comment>
<comment type="subcellular location">
    <subcellularLocation>
        <location evidence="1">Cell inner membrane</location>
        <topology evidence="1">Single-pass membrane protein</topology>
    </subcellularLocation>
</comment>
<comment type="similarity">
    <text evidence="1">Belongs to the glycosyltransferase 51 family.</text>
</comment>
<comment type="sequence caution" evidence="2">
    <conflict type="erroneous initiation">
        <sequence resource="EMBL-CDS" id="CAC47845"/>
    </conflict>
</comment>
<accession>Q92L23</accession>
<gene>
    <name evidence="1" type="primary">mtgA</name>
    <name type="ordered locus">R03266</name>
    <name type="ORF">SMc03883</name>
</gene>